<reference key="1">
    <citation type="journal article" date="1997" name="Mutat. Res.">
        <title>Construction of mutants of Salmonella typhimurium deficient in 8-hydroxyguanine DNA glycosylase and their sensitivities to oxidative mutagens and nitro compounds.</title>
        <authorList>
            <person name="Suzuki M."/>
            <person name="Matsui K."/>
            <person name="Yamada M."/>
            <person name="Kasai H."/>
            <person name="Sofuni T."/>
            <person name="Nohmi T."/>
        </authorList>
    </citation>
    <scope>NUCLEOTIDE SEQUENCE [GENOMIC DNA]</scope>
    <source>
        <strain>LT2</strain>
    </source>
</reference>
<reference key="2">
    <citation type="journal article" date="2001" name="Nature">
        <title>Complete genome sequence of Salmonella enterica serovar Typhimurium LT2.</title>
        <authorList>
            <person name="McClelland M."/>
            <person name="Sanderson K.E."/>
            <person name="Spieth J."/>
            <person name="Clifton S.W."/>
            <person name="Latreille P."/>
            <person name="Courtney L."/>
            <person name="Porwollik S."/>
            <person name="Ali J."/>
            <person name="Dante M."/>
            <person name="Du F."/>
            <person name="Hou S."/>
            <person name="Layman D."/>
            <person name="Leonard S."/>
            <person name="Nguyen C."/>
            <person name="Scott K."/>
            <person name="Holmes A."/>
            <person name="Grewal N."/>
            <person name="Mulvaney E."/>
            <person name="Ryan E."/>
            <person name="Sun H."/>
            <person name="Florea L."/>
            <person name="Miller W."/>
            <person name="Stoneking T."/>
            <person name="Nhan M."/>
            <person name="Waterston R."/>
            <person name="Wilson R.K."/>
        </authorList>
    </citation>
    <scope>NUCLEOTIDE SEQUENCE [LARGE SCALE GENOMIC DNA]</scope>
    <source>
        <strain>LT2 / SGSC1412 / ATCC 700720</strain>
    </source>
</reference>
<feature type="initiator methionine" description="Removed" evidence="1">
    <location>
        <position position="1"/>
    </location>
</feature>
<feature type="chain" id="PRO_0000170860" description="Formamidopyrimidine-DNA glycosylase">
    <location>
        <begin position="2"/>
        <end position="269"/>
    </location>
</feature>
<feature type="zinc finger region" description="FPG-type">
    <location>
        <begin position="235"/>
        <end position="269"/>
    </location>
</feature>
<feature type="active site" description="Schiff-base intermediate with DNA" evidence="1">
    <location>
        <position position="2"/>
    </location>
</feature>
<feature type="active site" description="Proton donor" evidence="1">
    <location>
        <position position="3"/>
    </location>
</feature>
<feature type="active site" description="Proton donor; for beta-elimination activity" evidence="1">
    <location>
        <position position="57"/>
    </location>
</feature>
<feature type="active site" description="Proton donor; for delta-elimination activity" evidence="1">
    <location>
        <position position="259"/>
    </location>
</feature>
<feature type="binding site" evidence="1">
    <location>
        <position position="90"/>
    </location>
    <ligand>
        <name>DNA</name>
        <dbReference type="ChEBI" id="CHEBI:16991"/>
    </ligand>
</feature>
<feature type="binding site" evidence="1">
    <location>
        <position position="109"/>
    </location>
    <ligand>
        <name>DNA</name>
        <dbReference type="ChEBI" id="CHEBI:16991"/>
    </ligand>
</feature>
<feature type="binding site" evidence="1">
    <location>
        <position position="150"/>
    </location>
    <ligand>
        <name>DNA</name>
        <dbReference type="ChEBI" id="CHEBI:16991"/>
    </ligand>
</feature>
<keyword id="KW-0227">DNA damage</keyword>
<keyword id="KW-0234">DNA repair</keyword>
<keyword id="KW-0238">DNA-binding</keyword>
<keyword id="KW-0326">Glycosidase</keyword>
<keyword id="KW-0378">Hydrolase</keyword>
<keyword id="KW-0456">Lyase</keyword>
<keyword id="KW-0479">Metal-binding</keyword>
<keyword id="KW-0511">Multifunctional enzyme</keyword>
<keyword id="KW-1185">Reference proteome</keyword>
<keyword id="KW-0862">Zinc</keyword>
<keyword id="KW-0863">Zinc-finger</keyword>
<sequence length="269" mass="30233">MPELPEVETSRRGIEPHLVGATILHAHIRNGRLRWPVSDEIYRLSDTPVLSVQRRAKYLLLELPDGWIIIHLGMSGSLRILPEALPAEKHDHVDLVMSNGKILRYTDPRRFGAWLWTKELEGHNVLAHLGPEPLSDEFNGEYLQQKCAKKKTAIKPWLMDNKLVVGVGNIYASESLFAAGIHPDRLASSLSTEECDLLARVIKAVLLRSIEQGGTTLKDFLQSDGKPGYFAQELQVYGRKGEPCRVCGTPIVATKHAQRATFYCRHCQK</sequence>
<comment type="function">
    <text evidence="1">Involved in base excision repair of DNA damaged by oxidation or by mutagenic agents. Acts as a DNA glycosylase that recognizes and removes damaged bases. Has a preference for oxidized purines, such as 7,8-dihydro-8-oxoguanine (8-oxoG). Has AP (apurinic/apyrimidinic) lyase activity and introduces nicks in the DNA strand. Cleaves the DNA backbone by beta-delta elimination to generate a single-strand break at the site of the removed base with both 3'- and 5'-phosphates (By similarity).</text>
</comment>
<comment type="catalytic activity">
    <reaction>
        <text>Hydrolysis of DNA containing ring-opened 7-methylguanine residues, releasing 2,6-diamino-4-hydroxy-5-(N-methyl)formamidopyrimidine.</text>
        <dbReference type="EC" id="3.2.2.23"/>
    </reaction>
</comment>
<comment type="catalytic activity">
    <reaction>
        <text>2'-deoxyribonucleotide-(2'-deoxyribose 5'-phosphate)-2'-deoxyribonucleotide-DNA = a 3'-end 2'-deoxyribonucleotide-(2,3-dehydro-2,3-deoxyribose 5'-phosphate)-DNA + a 5'-end 5'-phospho-2'-deoxyribonucleoside-DNA + H(+)</text>
        <dbReference type="Rhea" id="RHEA:66592"/>
        <dbReference type="Rhea" id="RHEA-COMP:13180"/>
        <dbReference type="Rhea" id="RHEA-COMP:16897"/>
        <dbReference type="Rhea" id="RHEA-COMP:17067"/>
        <dbReference type="ChEBI" id="CHEBI:15378"/>
        <dbReference type="ChEBI" id="CHEBI:136412"/>
        <dbReference type="ChEBI" id="CHEBI:157695"/>
        <dbReference type="ChEBI" id="CHEBI:167181"/>
        <dbReference type="EC" id="4.2.99.18"/>
    </reaction>
</comment>
<comment type="cofactor">
    <cofactor evidence="1">
        <name>Zn(2+)</name>
        <dbReference type="ChEBI" id="CHEBI:29105"/>
    </cofactor>
    <text evidence="1">Binds 1 zinc ion per subunit.</text>
</comment>
<comment type="subunit">
    <text evidence="1">Monomer.</text>
</comment>
<comment type="similarity">
    <text evidence="2">Belongs to the FPG family.</text>
</comment>
<name>FPG_SALTY</name>
<accession>O54326</accession>
<proteinExistence type="inferred from homology"/>
<organism>
    <name type="scientific">Salmonella typhimurium (strain LT2 / SGSC1412 / ATCC 700720)</name>
    <dbReference type="NCBI Taxonomy" id="99287"/>
    <lineage>
        <taxon>Bacteria</taxon>
        <taxon>Pseudomonadati</taxon>
        <taxon>Pseudomonadota</taxon>
        <taxon>Gammaproteobacteria</taxon>
        <taxon>Enterobacterales</taxon>
        <taxon>Enterobacteriaceae</taxon>
        <taxon>Salmonella</taxon>
    </lineage>
</organism>
<protein>
    <recommendedName>
        <fullName>Formamidopyrimidine-DNA glycosylase</fullName>
        <shortName>Fapy-DNA glycosylase</shortName>
        <ecNumber>3.2.2.23</ecNumber>
    </recommendedName>
    <alternativeName>
        <fullName>DNA-(apurinic or apyrimidinic site) lyase MutM</fullName>
        <shortName>AP lyase MutM</shortName>
        <ecNumber>4.2.99.18</ecNumber>
    </alternativeName>
</protein>
<dbReference type="EC" id="3.2.2.23"/>
<dbReference type="EC" id="4.2.99.18"/>
<dbReference type="EMBL" id="U23405">
    <property type="protein sequence ID" value="AAC01773.1"/>
    <property type="molecule type" value="Genomic_DNA"/>
</dbReference>
<dbReference type="EMBL" id="AE006468">
    <property type="protein sequence ID" value="AAL22585.1"/>
    <property type="molecule type" value="Genomic_DNA"/>
</dbReference>
<dbReference type="RefSeq" id="NP_462626.1">
    <property type="nucleotide sequence ID" value="NC_003197.2"/>
</dbReference>
<dbReference type="RefSeq" id="WP_001114508.1">
    <property type="nucleotide sequence ID" value="NC_003197.2"/>
</dbReference>
<dbReference type="SMR" id="O54326"/>
<dbReference type="STRING" id="99287.STM3726"/>
<dbReference type="PaxDb" id="99287-STM3726"/>
<dbReference type="GeneID" id="1255250"/>
<dbReference type="KEGG" id="stm:STM3726"/>
<dbReference type="PATRIC" id="fig|99287.12.peg.3942"/>
<dbReference type="HOGENOM" id="CLU_038423_1_1_6"/>
<dbReference type="OMA" id="WMNRSSY"/>
<dbReference type="PhylomeDB" id="O54326"/>
<dbReference type="BioCyc" id="SENT99287:STM3726-MONOMER"/>
<dbReference type="Proteomes" id="UP000001014">
    <property type="component" value="Chromosome"/>
</dbReference>
<dbReference type="GO" id="GO:0034039">
    <property type="term" value="F:8-oxo-7,8-dihydroguanine DNA N-glycosylase activity"/>
    <property type="evidence" value="ECO:0000318"/>
    <property type="project" value="GO_Central"/>
</dbReference>
<dbReference type="GO" id="GO:0140078">
    <property type="term" value="F:class I DNA-(apurinic or apyrimidinic site) endonuclease activity"/>
    <property type="evidence" value="ECO:0007669"/>
    <property type="project" value="UniProtKB-EC"/>
</dbReference>
<dbReference type="GO" id="GO:0003684">
    <property type="term" value="F:damaged DNA binding"/>
    <property type="evidence" value="ECO:0007669"/>
    <property type="project" value="InterPro"/>
</dbReference>
<dbReference type="GO" id="GO:0003906">
    <property type="term" value="F:DNA-(apurinic or apyrimidinic site) endonuclease activity"/>
    <property type="evidence" value="ECO:0000318"/>
    <property type="project" value="GO_Central"/>
</dbReference>
<dbReference type="GO" id="GO:0008270">
    <property type="term" value="F:zinc ion binding"/>
    <property type="evidence" value="ECO:0007669"/>
    <property type="project" value="UniProtKB-UniRule"/>
</dbReference>
<dbReference type="GO" id="GO:0006284">
    <property type="term" value="P:base-excision repair"/>
    <property type="evidence" value="ECO:0000318"/>
    <property type="project" value="GO_Central"/>
</dbReference>
<dbReference type="CDD" id="cd08966">
    <property type="entry name" value="EcFpg-like_N"/>
    <property type="match status" value="1"/>
</dbReference>
<dbReference type="FunFam" id="1.10.8.50:FF:000003">
    <property type="entry name" value="Formamidopyrimidine-DNA glycosylase"/>
    <property type="match status" value="1"/>
</dbReference>
<dbReference type="FunFam" id="3.20.190.10:FF:000001">
    <property type="entry name" value="Formamidopyrimidine-DNA glycosylase"/>
    <property type="match status" value="1"/>
</dbReference>
<dbReference type="Gene3D" id="1.10.8.50">
    <property type="match status" value="1"/>
</dbReference>
<dbReference type="Gene3D" id="3.20.190.10">
    <property type="entry name" value="MutM-like, N-terminal"/>
    <property type="match status" value="1"/>
</dbReference>
<dbReference type="HAMAP" id="MF_00103">
    <property type="entry name" value="Fapy_DNA_glycosyl"/>
    <property type="match status" value="1"/>
</dbReference>
<dbReference type="InterPro" id="IPR015886">
    <property type="entry name" value="DNA_glyclase/AP_lyase_DNA-bd"/>
</dbReference>
<dbReference type="InterPro" id="IPR015887">
    <property type="entry name" value="DNA_glyclase_Znf_dom_DNA_BS"/>
</dbReference>
<dbReference type="InterPro" id="IPR020629">
    <property type="entry name" value="Formamido-pyr_DNA_Glyclase"/>
</dbReference>
<dbReference type="InterPro" id="IPR012319">
    <property type="entry name" value="FPG_cat"/>
</dbReference>
<dbReference type="InterPro" id="IPR035937">
    <property type="entry name" value="MutM-like_N-ter"/>
</dbReference>
<dbReference type="InterPro" id="IPR010979">
    <property type="entry name" value="Ribosomal_uS13-like_H2TH"/>
</dbReference>
<dbReference type="InterPro" id="IPR000214">
    <property type="entry name" value="Znf_DNA_glyclase/AP_lyase"/>
</dbReference>
<dbReference type="InterPro" id="IPR010663">
    <property type="entry name" value="Znf_FPG/IleRS"/>
</dbReference>
<dbReference type="NCBIfam" id="TIGR00577">
    <property type="entry name" value="fpg"/>
    <property type="match status" value="1"/>
</dbReference>
<dbReference type="NCBIfam" id="NF002211">
    <property type="entry name" value="PRK01103.1"/>
    <property type="match status" value="1"/>
</dbReference>
<dbReference type="PANTHER" id="PTHR22993">
    <property type="entry name" value="FORMAMIDOPYRIMIDINE-DNA GLYCOSYLASE"/>
    <property type="match status" value="1"/>
</dbReference>
<dbReference type="PANTHER" id="PTHR22993:SF9">
    <property type="entry name" value="FORMAMIDOPYRIMIDINE-DNA GLYCOSYLASE"/>
    <property type="match status" value="1"/>
</dbReference>
<dbReference type="Pfam" id="PF01149">
    <property type="entry name" value="Fapy_DNA_glyco"/>
    <property type="match status" value="1"/>
</dbReference>
<dbReference type="Pfam" id="PF06831">
    <property type="entry name" value="H2TH"/>
    <property type="match status" value="1"/>
</dbReference>
<dbReference type="Pfam" id="PF06827">
    <property type="entry name" value="zf-FPG_IleRS"/>
    <property type="match status" value="1"/>
</dbReference>
<dbReference type="SMART" id="SM00898">
    <property type="entry name" value="Fapy_DNA_glyco"/>
    <property type="match status" value="1"/>
</dbReference>
<dbReference type="SMART" id="SM01232">
    <property type="entry name" value="H2TH"/>
    <property type="match status" value="1"/>
</dbReference>
<dbReference type="SUPFAM" id="SSF57716">
    <property type="entry name" value="Glucocorticoid receptor-like (DNA-binding domain)"/>
    <property type="match status" value="1"/>
</dbReference>
<dbReference type="SUPFAM" id="SSF81624">
    <property type="entry name" value="N-terminal domain of MutM-like DNA repair proteins"/>
    <property type="match status" value="1"/>
</dbReference>
<dbReference type="SUPFAM" id="SSF46946">
    <property type="entry name" value="S13-like H2TH domain"/>
    <property type="match status" value="1"/>
</dbReference>
<dbReference type="PROSITE" id="PS51068">
    <property type="entry name" value="FPG_CAT"/>
    <property type="match status" value="1"/>
</dbReference>
<dbReference type="PROSITE" id="PS01242">
    <property type="entry name" value="ZF_FPG_1"/>
    <property type="match status" value="1"/>
</dbReference>
<dbReference type="PROSITE" id="PS51066">
    <property type="entry name" value="ZF_FPG_2"/>
    <property type="match status" value="1"/>
</dbReference>
<gene>
    <name type="primary">mutM</name>
    <name type="synonym">fpg</name>
    <name type="ordered locus">STM3726</name>
</gene>
<evidence type="ECO:0000250" key="1"/>
<evidence type="ECO:0000305" key="2"/>